<name>PURNU_STAAW</name>
<feature type="chain" id="PRO_0000163176" description="Purine nucleoside phosphorylase MW1070">
    <location>
        <begin position="1"/>
        <end position="263"/>
    </location>
</feature>
<feature type="binding site" evidence="2">
    <location>
        <position position="79"/>
    </location>
    <ligand>
        <name>Zn(2+)</name>
        <dbReference type="ChEBI" id="CHEBI:29105"/>
        <note>catalytic</note>
    </ligand>
</feature>
<feature type="binding site" evidence="2">
    <location>
        <position position="124"/>
    </location>
    <ligand>
        <name>Zn(2+)</name>
        <dbReference type="ChEBI" id="CHEBI:29105"/>
        <note>catalytic</note>
    </ligand>
</feature>
<feature type="binding site" evidence="2">
    <location>
        <position position="141"/>
    </location>
    <ligand>
        <name>Zn(2+)</name>
        <dbReference type="ChEBI" id="CHEBI:29105"/>
        <note>catalytic</note>
    </ligand>
</feature>
<reference key="1">
    <citation type="journal article" date="2002" name="Lancet">
        <title>Genome and virulence determinants of high virulence community-acquired MRSA.</title>
        <authorList>
            <person name="Baba T."/>
            <person name="Takeuchi F."/>
            <person name="Kuroda M."/>
            <person name="Yuzawa H."/>
            <person name="Aoki K."/>
            <person name="Oguchi A."/>
            <person name="Nagai Y."/>
            <person name="Iwama N."/>
            <person name="Asano K."/>
            <person name="Naimi T."/>
            <person name="Kuroda H."/>
            <person name="Cui L."/>
            <person name="Yamamoto K."/>
            <person name="Hiramatsu K."/>
        </authorList>
    </citation>
    <scope>NUCLEOTIDE SEQUENCE [LARGE SCALE GENOMIC DNA]</scope>
    <source>
        <strain>MW2</strain>
    </source>
</reference>
<keyword id="KW-0186">Copper</keyword>
<keyword id="KW-0378">Hydrolase</keyword>
<keyword id="KW-0479">Metal-binding</keyword>
<keyword id="KW-0560">Oxidoreductase</keyword>
<keyword id="KW-0808">Transferase</keyword>
<keyword id="KW-0862">Zinc</keyword>
<dbReference type="EC" id="2.4.2.1" evidence="2"/>
<dbReference type="EC" id="3.5.4.4" evidence="2"/>
<dbReference type="EC" id="2.4.2.28" evidence="2"/>
<dbReference type="EMBL" id="BA000033">
    <property type="protein sequence ID" value="BAB94935.1"/>
    <property type="molecule type" value="Genomic_DNA"/>
</dbReference>
<dbReference type="SMR" id="Q8NX32"/>
<dbReference type="KEGG" id="sam:MW1070"/>
<dbReference type="HOGENOM" id="CLU_065784_0_0_9"/>
<dbReference type="GO" id="GO:0004000">
    <property type="term" value="F:adenosine deaminase activity"/>
    <property type="evidence" value="ECO:0007669"/>
    <property type="project" value="RHEA"/>
</dbReference>
<dbReference type="GO" id="GO:0005507">
    <property type="term" value="F:copper ion binding"/>
    <property type="evidence" value="ECO:0007669"/>
    <property type="project" value="TreeGrafter"/>
</dbReference>
<dbReference type="GO" id="GO:0016491">
    <property type="term" value="F:oxidoreductase activity"/>
    <property type="evidence" value="ECO:0007669"/>
    <property type="project" value="UniProtKB-KW"/>
</dbReference>
<dbReference type="GO" id="GO:0017061">
    <property type="term" value="F:S-methyl-5-thioadenosine phosphorylase activity"/>
    <property type="evidence" value="ECO:0007669"/>
    <property type="project" value="UniProtKB-EC"/>
</dbReference>
<dbReference type="CDD" id="cd16833">
    <property type="entry name" value="YfiH"/>
    <property type="match status" value="1"/>
</dbReference>
<dbReference type="Gene3D" id="3.60.140.10">
    <property type="entry name" value="CNF1/YfiH-like putative cysteine hydrolases"/>
    <property type="match status" value="1"/>
</dbReference>
<dbReference type="InterPro" id="IPR003730">
    <property type="entry name" value="Cu_polyphenol_OxRdtase"/>
</dbReference>
<dbReference type="InterPro" id="IPR038371">
    <property type="entry name" value="Cu_polyphenol_OxRdtase_sf"/>
</dbReference>
<dbReference type="InterPro" id="IPR011324">
    <property type="entry name" value="Cytotoxic_necrot_fac-like_cat"/>
</dbReference>
<dbReference type="NCBIfam" id="TIGR00726">
    <property type="entry name" value="peptidoglycan editing factor PgeF"/>
    <property type="match status" value="1"/>
</dbReference>
<dbReference type="PANTHER" id="PTHR30616:SF2">
    <property type="entry name" value="PURINE NUCLEOSIDE PHOSPHORYLASE LACC1"/>
    <property type="match status" value="1"/>
</dbReference>
<dbReference type="PANTHER" id="PTHR30616">
    <property type="entry name" value="UNCHARACTERIZED PROTEIN YFIH"/>
    <property type="match status" value="1"/>
</dbReference>
<dbReference type="Pfam" id="PF02578">
    <property type="entry name" value="Cu-oxidase_4"/>
    <property type="match status" value="1"/>
</dbReference>
<dbReference type="SUPFAM" id="SSF64438">
    <property type="entry name" value="CNF1/YfiH-like putative cysteine hydrolases"/>
    <property type="match status" value="1"/>
</dbReference>
<comment type="function">
    <text evidence="2">Purine nucleoside enzyme that catalyzes the phosphorolysis of adenosine and inosine nucleosides, yielding D-ribose 1-phosphate and the respective free bases, adenine and hypoxanthine. Also catalyzes the phosphorolysis of S-methyl-5'-thioadenosine into adenine and S-methyl-5-thio-alpha-D-ribose 1-phosphate. Also has adenosine deaminase activity.</text>
</comment>
<comment type="catalytic activity">
    <reaction evidence="2">
        <text>adenosine + phosphate = alpha-D-ribose 1-phosphate + adenine</text>
        <dbReference type="Rhea" id="RHEA:27642"/>
        <dbReference type="ChEBI" id="CHEBI:16335"/>
        <dbReference type="ChEBI" id="CHEBI:16708"/>
        <dbReference type="ChEBI" id="CHEBI:43474"/>
        <dbReference type="ChEBI" id="CHEBI:57720"/>
        <dbReference type="EC" id="2.4.2.1"/>
    </reaction>
    <physiologicalReaction direction="left-to-right" evidence="2">
        <dbReference type="Rhea" id="RHEA:27643"/>
    </physiologicalReaction>
</comment>
<comment type="catalytic activity">
    <reaction evidence="2">
        <text>S-methyl-5'-thioadenosine + phosphate = 5-(methylsulfanyl)-alpha-D-ribose 1-phosphate + adenine</text>
        <dbReference type="Rhea" id="RHEA:11852"/>
        <dbReference type="ChEBI" id="CHEBI:16708"/>
        <dbReference type="ChEBI" id="CHEBI:17509"/>
        <dbReference type="ChEBI" id="CHEBI:43474"/>
        <dbReference type="ChEBI" id="CHEBI:58533"/>
        <dbReference type="EC" id="2.4.2.28"/>
    </reaction>
    <physiologicalReaction direction="left-to-right" evidence="2">
        <dbReference type="Rhea" id="RHEA:11853"/>
    </physiologicalReaction>
</comment>
<comment type="catalytic activity">
    <reaction evidence="2">
        <text>inosine + phosphate = alpha-D-ribose 1-phosphate + hypoxanthine</text>
        <dbReference type="Rhea" id="RHEA:27646"/>
        <dbReference type="ChEBI" id="CHEBI:17368"/>
        <dbReference type="ChEBI" id="CHEBI:17596"/>
        <dbReference type="ChEBI" id="CHEBI:43474"/>
        <dbReference type="ChEBI" id="CHEBI:57720"/>
        <dbReference type="EC" id="2.4.2.1"/>
    </reaction>
    <physiologicalReaction direction="left-to-right" evidence="2">
        <dbReference type="Rhea" id="RHEA:27647"/>
    </physiologicalReaction>
</comment>
<comment type="catalytic activity">
    <reaction evidence="2">
        <text>adenosine + H2O + H(+) = inosine + NH4(+)</text>
        <dbReference type="Rhea" id="RHEA:24408"/>
        <dbReference type="ChEBI" id="CHEBI:15377"/>
        <dbReference type="ChEBI" id="CHEBI:15378"/>
        <dbReference type="ChEBI" id="CHEBI:16335"/>
        <dbReference type="ChEBI" id="CHEBI:17596"/>
        <dbReference type="ChEBI" id="CHEBI:28938"/>
        <dbReference type="EC" id="3.5.4.4"/>
    </reaction>
    <physiologicalReaction direction="left-to-right" evidence="2">
        <dbReference type="Rhea" id="RHEA:24409"/>
    </physiologicalReaction>
</comment>
<comment type="cofactor">
    <cofactor evidence="1">
        <name>Cu(2+)</name>
        <dbReference type="ChEBI" id="CHEBI:29036"/>
    </cofactor>
    <cofactor evidence="2">
        <name>Zn(2+)</name>
        <dbReference type="ChEBI" id="CHEBI:29105"/>
    </cofactor>
</comment>
<comment type="subunit">
    <text evidence="3">Homodimer.</text>
</comment>
<comment type="similarity">
    <text evidence="4">Belongs to the purine nucleoside phosphorylase YfiH/LACC1 family.</text>
</comment>
<organism>
    <name type="scientific">Staphylococcus aureus (strain MW2)</name>
    <dbReference type="NCBI Taxonomy" id="196620"/>
    <lineage>
        <taxon>Bacteria</taxon>
        <taxon>Bacillati</taxon>
        <taxon>Bacillota</taxon>
        <taxon>Bacilli</taxon>
        <taxon>Bacillales</taxon>
        <taxon>Staphylococcaceae</taxon>
        <taxon>Staphylococcus</taxon>
    </lineage>
</organism>
<proteinExistence type="inferred from homology"/>
<accession>Q8NX32</accession>
<gene>
    <name type="ordered locus">MW1070</name>
</gene>
<evidence type="ECO:0000250" key="1">
    <source>
        <dbReference type="UniProtKB" id="P33644"/>
    </source>
</evidence>
<evidence type="ECO:0000250" key="2">
    <source>
        <dbReference type="UniProtKB" id="P84138"/>
    </source>
</evidence>
<evidence type="ECO:0000250" key="3">
    <source>
        <dbReference type="UniProtKB" id="Q1EIR0"/>
    </source>
</evidence>
<evidence type="ECO:0000305" key="4"/>
<sequence>MNDNFKKQPHHLIYEELLQQGITLGITTRGDGLSDYPKNAFNMARYIDDRPYNITQHQLQLAEEIAFDRKNWVFPIQTHENKVACITKDDIGTNIDTLTDALHGIDAMYTYDSNVLLTMCYADCVPVYFYSTKHHFIALAHAGWRGTYTEIVKEVLKHVNFDLKDLHVVIGPSTSSSYEINDDIKNKFETLPIDSANYIETRGRDRHGIDLKKANAALLNYYGVPKENIYTTAYATSEHLELFFSYRLEKGQTGRMLAFIGQQ</sequence>
<protein>
    <recommendedName>
        <fullName>Purine nucleoside phosphorylase MW1070</fullName>
        <ecNumber evidence="2">2.4.2.1</ecNumber>
    </recommendedName>
    <alternativeName>
        <fullName>Adenosine deaminase MW1070</fullName>
        <ecNumber evidence="2">3.5.4.4</ecNumber>
    </alternativeName>
    <alternativeName>
        <fullName>S-methyl-5'-thioadenosine phosphorylase MW1070</fullName>
        <ecNumber evidence="2">2.4.2.28</ecNumber>
    </alternativeName>
</protein>